<proteinExistence type="inferred from homology"/>
<feature type="chain" id="PRO_0000374228" description="tRNA-2-methylthio-N(6)-dimethylallyladenosine synthase">
    <location>
        <begin position="1"/>
        <end position="478"/>
    </location>
</feature>
<feature type="domain" description="MTTase N-terminal" evidence="1">
    <location>
        <begin position="39"/>
        <end position="157"/>
    </location>
</feature>
<feature type="domain" description="Radical SAM core" evidence="2">
    <location>
        <begin position="180"/>
        <end position="410"/>
    </location>
</feature>
<feature type="domain" description="TRAM" evidence="1">
    <location>
        <begin position="410"/>
        <end position="477"/>
    </location>
</feature>
<feature type="binding site" evidence="1">
    <location>
        <position position="48"/>
    </location>
    <ligand>
        <name>[4Fe-4S] cluster</name>
        <dbReference type="ChEBI" id="CHEBI:49883"/>
        <label>1</label>
    </ligand>
</feature>
<feature type="binding site" evidence="1">
    <location>
        <position position="84"/>
    </location>
    <ligand>
        <name>[4Fe-4S] cluster</name>
        <dbReference type="ChEBI" id="CHEBI:49883"/>
        <label>1</label>
    </ligand>
</feature>
<feature type="binding site" evidence="1">
    <location>
        <position position="118"/>
    </location>
    <ligand>
        <name>[4Fe-4S] cluster</name>
        <dbReference type="ChEBI" id="CHEBI:49883"/>
        <label>1</label>
    </ligand>
</feature>
<feature type="binding site" evidence="1">
    <location>
        <position position="194"/>
    </location>
    <ligand>
        <name>[4Fe-4S] cluster</name>
        <dbReference type="ChEBI" id="CHEBI:49883"/>
        <label>2</label>
        <note>4Fe-4S-S-AdoMet</note>
    </ligand>
</feature>
<feature type="binding site" evidence="1">
    <location>
        <position position="198"/>
    </location>
    <ligand>
        <name>[4Fe-4S] cluster</name>
        <dbReference type="ChEBI" id="CHEBI:49883"/>
        <label>2</label>
        <note>4Fe-4S-S-AdoMet</note>
    </ligand>
</feature>
<feature type="binding site" evidence="1">
    <location>
        <position position="201"/>
    </location>
    <ligand>
        <name>[4Fe-4S] cluster</name>
        <dbReference type="ChEBI" id="CHEBI:49883"/>
        <label>2</label>
        <note>4Fe-4S-S-AdoMet</note>
    </ligand>
</feature>
<gene>
    <name evidence="1" type="primary">miaB</name>
    <name type="ordered locus">CD630_19860</name>
</gene>
<comment type="function">
    <text evidence="1">Catalyzes the methylthiolation of N6-(dimethylallyl)adenosine (i(6)A), leading to the formation of 2-methylthio-N6-(dimethylallyl)adenosine (ms(2)i(6)A) at position 37 in tRNAs that read codons beginning with uridine.</text>
</comment>
<comment type="catalytic activity">
    <reaction evidence="1">
        <text>N(6)-dimethylallyladenosine(37) in tRNA + (sulfur carrier)-SH + AH2 + 2 S-adenosyl-L-methionine = 2-methylsulfanyl-N(6)-dimethylallyladenosine(37) in tRNA + (sulfur carrier)-H + 5'-deoxyadenosine + L-methionine + A + S-adenosyl-L-homocysteine + 2 H(+)</text>
        <dbReference type="Rhea" id="RHEA:37067"/>
        <dbReference type="Rhea" id="RHEA-COMP:10375"/>
        <dbReference type="Rhea" id="RHEA-COMP:10376"/>
        <dbReference type="Rhea" id="RHEA-COMP:14737"/>
        <dbReference type="Rhea" id="RHEA-COMP:14739"/>
        <dbReference type="ChEBI" id="CHEBI:13193"/>
        <dbReference type="ChEBI" id="CHEBI:15378"/>
        <dbReference type="ChEBI" id="CHEBI:17319"/>
        <dbReference type="ChEBI" id="CHEBI:17499"/>
        <dbReference type="ChEBI" id="CHEBI:29917"/>
        <dbReference type="ChEBI" id="CHEBI:57844"/>
        <dbReference type="ChEBI" id="CHEBI:57856"/>
        <dbReference type="ChEBI" id="CHEBI:59789"/>
        <dbReference type="ChEBI" id="CHEBI:64428"/>
        <dbReference type="ChEBI" id="CHEBI:74415"/>
        <dbReference type="ChEBI" id="CHEBI:74417"/>
        <dbReference type="EC" id="2.8.4.3"/>
    </reaction>
</comment>
<comment type="cofactor">
    <cofactor evidence="1">
        <name>[4Fe-4S] cluster</name>
        <dbReference type="ChEBI" id="CHEBI:49883"/>
    </cofactor>
    <text evidence="1">Binds 2 [4Fe-4S] clusters. One cluster is coordinated with 3 cysteines and an exchangeable S-adenosyl-L-methionine.</text>
</comment>
<comment type="subunit">
    <text evidence="1">Monomer.</text>
</comment>
<comment type="subcellular location">
    <subcellularLocation>
        <location evidence="1">Cytoplasm</location>
    </subcellularLocation>
</comment>
<comment type="similarity">
    <text evidence="1">Belongs to the methylthiotransferase family. MiaB subfamily.</text>
</comment>
<reference key="1">
    <citation type="journal article" date="2006" name="Nat. Genet.">
        <title>The multidrug-resistant human pathogen Clostridium difficile has a highly mobile, mosaic genome.</title>
        <authorList>
            <person name="Sebaihia M."/>
            <person name="Wren B.W."/>
            <person name="Mullany P."/>
            <person name="Fairweather N.F."/>
            <person name="Minton N."/>
            <person name="Stabler R."/>
            <person name="Thomson N.R."/>
            <person name="Roberts A.P."/>
            <person name="Cerdeno-Tarraga A.M."/>
            <person name="Wang H."/>
            <person name="Holden M.T.G."/>
            <person name="Wright A."/>
            <person name="Churcher C."/>
            <person name="Quail M.A."/>
            <person name="Baker S."/>
            <person name="Bason N."/>
            <person name="Brooks K."/>
            <person name="Chillingworth T."/>
            <person name="Cronin A."/>
            <person name="Davis P."/>
            <person name="Dowd L."/>
            <person name="Fraser A."/>
            <person name="Feltwell T."/>
            <person name="Hance Z."/>
            <person name="Holroyd S."/>
            <person name="Jagels K."/>
            <person name="Moule S."/>
            <person name="Mungall K."/>
            <person name="Price C."/>
            <person name="Rabbinowitsch E."/>
            <person name="Sharp S."/>
            <person name="Simmonds M."/>
            <person name="Stevens K."/>
            <person name="Unwin L."/>
            <person name="Whithead S."/>
            <person name="Dupuy B."/>
            <person name="Dougan G."/>
            <person name="Barrell B."/>
            <person name="Parkhill J."/>
        </authorList>
    </citation>
    <scope>NUCLEOTIDE SEQUENCE [LARGE SCALE GENOMIC DNA]</scope>
    <source>
        <strain>630</strain>
    </source>
</reference>
<keyword id="KW-0004">4Fe-4S</keyword>
<keyword id="KW-0963">Cytoplasm</keyword>
<keyword id="KW-0408">Iron</keyword>
<keyword id="KW-0411">Iron-sulfur</keyword>
<keyword id="KW-0479">Metal-binding</keyword>
<keyword id="KW-1185">Reference proteome</keyword>
<keyword id="KW-0949">S-adenosyl-L-methionine</keyword>
<keyword id="KW-0808">Transferase</keyword>
<keyword id="KW-0819">tRNA processing</keyword>
<organism>
    <name type="scientific">Clostridioides difficile (strain 630)</name>
    <name type="common">Peptoclostridium difficile</name>
    <dbReference type="NCBI Taxonomy" id="272563"/>
    <lineage>
        <taxon>Bacteria</taxon>
        <taxon>Bacillati</taxon>
        <taxon>Bacillota</taxon>
        <taxon>Clostridia</taxon>
        <taxon>Peptostreptococcales</taxon>
        <taxon>Peptostreptococcaceae</taxon>
        <taxon>Clostridioides</taxon>
    </lineage>
</organism>
<accession>Q187U6</accession>
<protein>
    <recommendedName>
        <fullName evidence="1">tRNA-2-methylthio-N(6)-dimethylallyladenosine synthase</fullName>
        <ecNumber evidence="1">2.8.4.3</ecNumber>
    </recommendedName>
    <alternativeName>
        <fullName evidence="1">(Dimethylallyl)adenosine tRNA methylthiotransferase MiaB</fullName>
    </alternativeName>
    <alternativeName>
        <fullName evidence="1">tRNA-i(6)A37 methylthiotransferase</fullName>
    </alternativeName>
</protein>
<name>MIAB_CLOD6</name>
<evidence type="ECO:0000255" key="1">
    <source>
        <dbReference type="HAMAP-Rule" id="MF_01864"/>
    </source>
</evidence>
<evidence type="ECO:0000255" key="2">
    <source>
        <dbReference type="PROSITE-ProRule" id="PRU01266"/>
    </source>
</evidence>
<sequence length="478" mass="55275">MSKRKQVTIPIEKIQEQDKYIEQIHRQNEEYFNRTGKRKLVFTQTFGCQMNEHDSEKLCSMLEEMGYQMSMMVEESDLIIYNTCAVRENAELKVYGNLGQLKHLKGKNPDMKIAVCGCMMQQPHVVEELRKKYKHVDLIFGTHNLYKFPQLLTESINSDKMLVDVWDVDGEVIEGLRSNRKFELKAFVNIMYGCNNFCTYCIVPYTRGRERSRTPEDIINEIKELVANGTKEITLLGQNVDSYGKTLENPVSFSELLRKVNDIEGIERVRFMTSHPKDISDEVIYAIRDCDKVCEFLHLPIQCGSSSLLKKMNRHYTKEYYLEIIEKAKKEVPGIAFSTDLMIGFPGETEEDLLDTLDVVEKVRYDSAFTFIYSKRQGTPAAKMENQIPEDIKHDRFNRVLEAVNRISAEINDGYKDRIVEVLVEGRSKNNENKFAGRTRQNKLVNFEGGNDDLIGKLVMVKITEPRTFSLNGILVNN</sequence>
<dbReference type="EC" id="2.8.4.3" evidence="1"/>
<dbReference type="EMBL" id="AM180355">
    <property type="protein sequence ID" value="CAJ68861.1"/>
    <property type="molecule type" value="Genomic_DNA"/>
</dbReference>
<dbReference type="RefSeq" id="WP_003435252.1">
    <property type="nucleotide sequence ID" value="NZ_JAUPES010000034.1"/>
</dbReference>
<dbReference type="RefSeq" id="YP_001088491.1">
    <property type="nucleotide sequence ID" value="NC_009089.1"/>
</dbReference>
<dbReference type="SMR" id="Q187U6"/>
<dbReference type="STRING" id="272563.CD630_19860"/>
<dbReference type="EnsemblBacteria" id="CAJ68861">
    <property type="protein sequence ID" value="CAJ68861"/>
    <property type="gene ID" value="CD630_19860"/>
</dbReference>
<dbReference type="GeneID" id="66354373"/>
<dbReference type="KEGG" id="cdf:CD630_19860"/>
<dbReference type="KEGG" id="pdc:CDIF630_02195"/>
<dbReference type="PATRIC" id="fig|272563.120.peg.2085"/>
<dbReference type="eggNOG" id="COG0621">
    <property type="taxonomic scope" value="Bacteria"/>
</dbReference>
<dbReference type="OrthoDB" id="9805215at2"/>
<dbReference type="PhylomeDB" id="Q187U6"/>
<dbReference type="BioCyc" id="PDIF272563:G12WB-2127-MONOMER"/>
<dbReference type="Proteomes" id="UP000001978">
    <property type="component" value="Chromosome"/>
</dbReference>
<dbReference type="GO" id="GO:0005829">
    <property type="term" value="C:cytosol"/>
    <property type="evidence" value="ECO:0007669"/>
    <property type="project" value="TreeGrafter"/>
</dbReference>
<dbReference type="GO" id="GO:0051539">
    <property type="term" value="F:4 iron, 4 sulfur cluster binding"/>
    <property type="evidence" value="ECO:0007669"/>
    <property type="project" value="UniProtKB-UniRule"/>
</dbReference>
<dbReference type="GO" id="GO:0046872">
    <property type="term" value="F:metal ion binding"/>
    <property type="evidence" value="ECO:0007669"/>
    <property type="project" value="UniProtKB-KW"/>
</dbReference>
<dbReference type="GO" id="GO:0035597">
    <property type="term" value="F:N6-isopentenyladenosine methylthiotransferase activity"/>
    <property type="evidence" value="ECO:0007669"/>
    <property type="project" value="TreeGrafter"/>
</dbReference>
<dbReference type="CDD" id="cd01335">
    <property type="entry name" value="Radical_SAM"/>
    <property type="match status" value="1"/>
</dbReference>
<dbReference type="FunFam" id="3.40.50.12160:FF:000006">
    <property type="entry name" value="tRNA-2-methylthio-N(6)-dimethylallyladenosine synthase"/>
    <property type="match status" value="1"/>
</dbReference>
<dbReference type="FunFam" id="3.80.30.20:FF:000001">
    <property type="entry name" value="tRNA-2-methylthio-N(6)-dimethylallyladenosine synthase 2"/>
    <property type="match status" value="1"/>
</dbReference>
<dbReference type="Gene3D" id="3.40.50.12160">
    <property type="entry name" value="Methylthiotransferase, N-terminal domain"/>
    <property type="match status" value="1"/>
</dbReference>
<dbReference type="Gene3D" id="3.80.30.20">
    <property type="entry name" value="tm_1862 like domain"/>
    <property type="match status" value="1"/>
</dbReference>
<dbReference type="HAMAP" id="MF_01864">
    <property type="entry name" value="tRNA_metthiotr_MiaB"/>
    <property type="match status" value="1"/>
</dbReference>
<dbReference type="InterPro" id="IPR006638">
    <property type="entry name" value="Elp3/MiaA/NifB-like_rSAM"/>
</dbReference>
<dbReference type="InterPro" id="IPR005839">
    <property type="entry name" value="Methylthiotransferase"/>
</dbReference>
<dbReference type="InterPro" id="IPR020612">
    <property type="entry name" value="Methylthiotransferase_CS"/>
</dbReference>
<dbReference type="InterPro" id="IPR013848">
    <property type="entry name" value="Methylthiotransferase_N"/>
</dbReference>
<dbReference type="InterPro" id="IPR038135">
    <property type="entry name" value="Methylthiotransferase_N_sf"/>
</dbReference>
<dbReference type="InterPro" id="IPR006463">
    <property type="entry name" value="MiaB_methiolase"/>
</dbReference>
<dbReference type="InterPro" id="IPR007197">
    <property type="entry name" value="rSAM"/>
</dbReference>
<dbReference type="InterPro" id="IPR023404">
    <property type="entry name" value="rSAM_horseshoe"/>
</dbReference>
<dbReference type="InterPro" id="IPR002792">
    <property type="entry name" value="TRAM_dom"/>
</dbReference>
<dbReference type="NCBIfam" id="TIGR01574">
    <property type="entry name" value="miaB-methiolase"/>
    <property type="match status" value="1"/>
</dbReference>
<dbReference type="NCBIfam" id="TIGR00089">
    <property type="entry name" value="MiaB/RimO family radical SAM methylthiotransferase"/>
    <property type="match status" value="1"/>
</dbReference>
<dbReference type="PANTHER" id="PTHR43020">
    <property type="entry name" value="CDK5 REGULATORY SUBUNIT-ASSOCIATED PROTEIN 1"/>
    <property type="match status" value="1"/>
</dbReference>
<dbReference type="PANTHER" id="PTHR43020:SF2">
    <property type="entry name" value="MITOCHONDRIAL TRNA METHYLTHIOTRANSFERASE CDK5RAP1"/>
    <property type="match status" value="1"/>
</dbReference>
<dbReference type="Pfam" id="PF04055">
    <property type="entry name" value="Radical_SAM"/>
    <property type="match status" value="1"/>
</dbReference>
<dbReference type="Pfam" id="PF01938">
    <property type="entry name" value="TRAM"/>
    <property type="match status" value="1"/>
</dbReference>
<dbReference type="Pfam" id="PF00919">
    <property type="entry name" value="UPF0004"/>
    <property type="match status" value="1"/>
</dbReference>
<dbReference type="SFLD" id="SFLDF00273">
    <property type="entry name" value="(dimethylallyl)adenosine_tRNA"/>
    <property type="match status" value="1"/>
</dbReference>
<dbReference type="SFLD" id="SFLDG01082">
    <property type="entry name" value="B12-binding_domain_containing"/>
    <property type="match status" value="1"/>
</dbReference>
<dbReference type="SFLD" id="SFLDG01061">
    <property type="entry name" value="methylthiotransferase"/>
    <property type="match status" value="1"/>
</dbReference>
<dbReference type="SMART" id="SM00729">
    <property type="entry name" value="Elp3"/>
    <property type="match status" value="1"/>
</dbReference>
<dbReference type="SUPFAM" id="SSF102114">
    <property type="entry name" value="Radical SAM enzymes"/>
    <property type="match status" value="1"/>
</dbReference>
<dbReference type="PROSITE" id="PS51449">
    <property type="entry name" value="MTTASE_N"/>
    <property type="match status" value="1"/>
</dbReference>
<dbReference type="PROSITE" id="PS01278">
    <property type="entry name" value="MTTASE_RADICAL"/>
    <property type="match status" value="1"/>
</dbReference>
<dbReference type="PROSITE" id="PS51918">
    <property type="entry name" value="RADICAL_SAM"/>
    <property type="match status" value="1"/>
</dbReference>
<dbReference type="PROSITE" id="PS50926">
    <property type="entry name" value="TRAM"/>
    <property type="match status" value="1"/>
</dbReference>